<organismHost>
    <name type="scientific">Gorilla gorilla</name>
    <name type="common">western gorilla</name>
    <dbReference type="NCBI Taxonomy" id="9593"/>
</organismHost>
<accession>P0C6I9</accession>
<gene>
    <name evidence="1" type="primary">C</name>
</gene>
<organism>
    <name type="scientific">Gorilla hepatitis B virus (isolate Cameroon/gor97)</name>
    <name type="common">HBVgor</name>
    <dbReference type="NCBI Taxonomy" id="489546"/>
    <lineage>
        <taxon>Viruses</taxon>
        <taxon>Riboviria</taxon>
        <taxon>Pararnavirae</taxon>
        <taxon>Artverviricota</taxon>
        <taxon>Revtraviricetes</taxon>
        <taxon>Blubervirales</taxon>
        <taxon>Hepadnaviridae</taxon>
        <taxon>Orthohepadnavirus</taxon>
        <taxon>Hepatitis B virus</taxon>
    </lineage>
</organism>
<evidence type="ECO:0000255" key="1">
    <source>
        <dbReference type="HAMAP-Rule" id="MF_04076"/>
    </source>
</evidence>
<evidence type="ECO:0000256" key="2">
    <source>
        <dbReference type="SAM" id="MobiDB-lite"/>
    </source>
</evidence>
<comment type="function">
    <text evidence="1">Self assembles to form an icosahedral capsid. Most capsids appear to be large particles with an icosahedral symmetry of T=4 and consist of 240 copies of capsid protein, though a fraction forms smaller T=3 particles consisting of 180 capsid proteins. Entering capsids are transported along microtubules to the nucleus. Phosphorylation of the capsid is thought to induce exposure of nuclear localization signal in the C-terminal portion of the capsid protein that allows binding to the nuclear pore complex via the importin (karyopherin-) alpha and beta. Capsids are imported in intact form through the nuclear pore into the nuclear basket, where it probably binds NUP153. Only capsids that contain the mature viral genome can release the viral DNA and capsid protein into the nucleoplasm. Immature capsids get stuck in the basket. Capsids encapsulate the pre-genomic RNA and the P protein. Pre-genomic RNA is reverse-transcribed into DNA while the capsid is still in the cytoplasm. The capsid can then either be directed to the nucleus, providing more genomes for transcription, or bud through the endoplasmic reticulum to provide new virions.</text>
</comment>
<comment type="subunit">
    <text evidence="1">Homodimerizes, then multimerizes. Interacts with cytosol exposed regions of viral L glycoprotein present in the reticulum-to-Golgi compartment. Interacts with human FLNB. Phosphorylated form interacts with host importin alpha; this interaction depends on the exposure of the NLS, which itself depends upon genome maturation and/or phosphorylation of the capsid protein. Interacts with host NUP153.</text>
</comment>
<comment type="subcellular location">
    <subcellularLocation>
        <location evidence="1">Virion</location>
    </subcellularLocation>
    <subcellularLocation>
        <location evidence="1">Host cytoplasm</location>
    </subcellularLocation>
</comment>
<comment type="alternative products">
    <event type="alternative initiation"/>
    <isoform>
        <id>P0C6I9-1</id>
        <name>Capsid protein</name>
        <sequence type="displayed"/>
    </isoform>
    <isoform>
        <id>Q9WJE9-1</id>
        <name>External core antigen</name>
        <sequence type="external"/>
    </isoform>
</comment>
<comment type="PTM">
    <text evidence="1">Phosphorylated by host SRPK1, SRPK2, and maybe protein kinase C or GAPDH. Phosphorylation is critical for pregenomic RNA packaging. Protein kinase C phosphorylation is stimulated by HBx protein and may play a role in transport of the viral genome to the nucleus at the late step during the viral replication cycle.</text>
</comment>
<comment type="similarity">
    <text evidence="1">Belongs to the orthohepadnavirus core antigen family.</text>
</comment>
<name>CAPSD_HBVGO</name>
<proteinExistence type="inferred from homology"/>
<protein>
    <recommendedName>
        <fullName evidence="1">Capsid protein</fullName>
    </recommendedName>
    <alternativeName>
        <fullName evidence="1">Core antigen</fullName>
    </alternativeName>
    <alternativeName>
        <fullName evidence="1">Core protein</fullName>
    </alternativeName>
    <alternativeName>
        <fullName evidence="1">HBcAg</fullName>
    </alternativeName>
    <alternativeName>
        <fullName evidence="1">p21.5</fullName>
    </alternativeName>
</protein>
<dbReference type="EMBL" id="AJ131567">
    <property type="status" value="NOT_ANNOTATED_CDS"/>
    <property type="molecule type" value="Genomic_DNA"/>
</dbReference>
<dbReference type="SMR" id="P0C6I9"/>
<dbReference type="Proteomes" id="UP000007535">
    <property type="component" value="Segment"/>
</dbReference>
<dbReference type="GO" id="GO:0043657">
    <property type="term" value="C:host cell"/>
    <property type="evidence" value="ECO:0007669"/>
    <property type="project" value="GOC"/>
</dbReference>
<dbReference type="GO" id="GO:0030430">
    <property type="term" value="C:host cell cytoplasm"/>
    <property type="evidence" value="ECO:0007669"/>
    <property type="project" value="UniProtKB-SubCell"/>
</dbReference>
<dbReference type="GO" id="GO:0039619">
    <property type="term" value="C:T=4 icosahedral viral capsid"/>
    <property type="evidence" value="ECO:0007669"/>
    <property type="project" value="UniProtKB-UniRule"/>
</dbReference>
<dbReference type="GO" id="GO:0003677">
    <property type="term" value="F:DNA binding"/>
    <property type="evidence" value="ECO:0007669"/>
    <property type="project" value="UniProtKB-UniRule"/>
</dbReference>
<dbReference type="GO" id="GO:0003723">
    <property type="term" value="F:RNA binding"/>
    <property type="evidence" value="ECO:0007669"/>
    <property type="project" value="UniProtKB-UniRule"/>
</dbReference>
<dbReference type="GO" id="GO:0005198">
    <property type="term" value="F:structural molecule activity"/>
    <property type="evidence" value="ECO:0007669"/>
    <property type="project" value="UniProtKB-UniRule"/>
</dbReference>
<dbReference type="GO" id="GO:0075521">
    <property type="term" value="P:microtubule-dependent intracellular transport of viral material towards nucleus"/>
    <property type="evidence" value="ECO:0007669"/>
    <property type="project" value="UniProtKB-UniRule"/>
</dbReference>
<dbReference type="GO" id="GO:0046718">
    <property type="term" value="P:symbiont entry into host cell"/>
    <property type="evidence" value="ECO:0007669"/>
    <property type="project" value="UniProtKB-UniRule"/>
</dbReference>
<dbReference type="GO" id="GO:0075732">
    <property type="term" value="P:viral penetration into host nucleus"/>
    <property type="evidence" value="ECO:0007669"/>
    <property type="project" value="UniProtKB-UniRule"/>
</dbReference>
<dbReference type="FunFam" id="1.10.4090.10:FF:000001">
    <property type="entry name" value="Capsid protein"/>
    <property type="match status" value="1"/>
</dbReference>
<dbReference type="Gene3D" id="1.10.4090.10">
    <property type="entry name" value="Viral capsid, core domain supefamily, Hepatitis B virus"/>
    <property type="match status" value="1"/>
</dbReference>
<dbReference type="HAMAP" id="MF_04076">
    <property type="entry name" value="HBV_HBEAG"/>
    <property type="match status" value="1"/>
</dbReference>
<dbReference type="InterPro" id="IPR002006">
    <property type="entry name" value="Hepatitis_core"/>
</dbReference>
<dbReference type="InterPro" id="IPR036459">
    <property type="entry name" value="Viral_capsid_core_dom_sf_HBV"/>
</dbReference>
<dbReference type="Pfam" id="PF00906">
    <property type="entry name" value="Hepatitis_core"/>
    <property type="match status" value="3"/>
</dbReference>
<dbReference type="SUPFAM" id="SSF47852">
    <property type="entry name" value="Hepatitis B viral capsid (hbcag)"/>
    <property type="match status" value="1"/>
</dbReference>
<keyword id="KW-0024">Alternative initiation</keyword>
<keyword id="KW-0167">Capsid protein</keyword>
<keyword id="KW-1176">Cytoplasmic inwards viral transport</keyword>
<keyword id="KW-0238">DNA-binding</keyword>
<keyword id="KW-1035">Host cytoplasm</keyword>
<keyword id="KW-0945">Host-virus interaction</keyword>
<keyword id="KW-1177">Microtubular inwards viral transport</keyword>
<keyword id="KW-0597">Phosphoprotein</keyword>
<keyword id="KW-0677">Repeat</keyword>
<keyword id="KW-0694">RNA-binding</keyword>
<keyword id="KW-1144">T=4 icosahedral capsid protein</keyword>
<keyword id="KW-1163">Viral penetration into host nucleus</keyword>
<keyword id="KW-0946">Virion</keyword>
<keyword id="KW-1160">Virus entry into host cell</keyword>
<feature type="chain" id="PRO_0000324379" description="Capsid protein">
    <location>
        <begin position="1"/>
        <end position="183"/>
    </location>
</feature>
<feature type="repeat" description="1; half-length">
    <location>
        <begin position="155"/>
        <end position="161"/>
    </location>
</feature>
<feature type="repeat" description="2">
    <location>
        <begin position="162"/>
        <end position="169"/>
    </location>
</feature>
<feature type="repeat" description="3">
    <location>
        <begin position="170"/>
        <end position="177"/>
    </location>
</feature>
<feature type="region of interest" description="Disordered" evidence="2">
    <location>
        <begin position="143"/>
        <end position="183"/>
    </location>
</feature>
<feature type="region of interest" description="3 X 8 AA repeats of S-P-R-R-R-[PR]-S-Q">
    <location>
        <begin position="155"/>
        <end position="177"/>
    </location>
</feature>
<feature type="region of interest" description="RNA binding" evidence="1">
    <location>
        <begin position="177"/>
        <end position="183"/>
    </location>
</feature>
<feature type="short sequence motif" description="Bipartite nuclear localization signal" evidence="1">
    <location>
        <begin position="158"/>
        <end position="175"/>
    </location>
</feature>
<feature type="compositionally biased region" description="Basic residues" evidence="2">
    <location>
        <begin position="149"/>
        <end position="176"/>
    </location>
</feature>
<feature type="modified residue" description="Phosphoserine; by host" evidence="1">
    <location>
        <position position="155"/>
    </location>
</feature>
<feature type="modified residue" description="Phosphoserine; by host" evidence="1">
    <location>
        <position position="162"/>
    </location>
</feature>
<feature type="modified residue" description="Phosphoserine; by host" evidence="1">
    <location>
        <position position="170"/>
    </location>
</feature>
<sequence length="183" mass="20969">MDIDPYKEFGATVELLSFLPSDFFPSVRDLLDTASALYREALESPEHCSPNHTALRQAILCWGELMTLASWVGNNLEDPASREQVVNYVNTNMGLKIRQLLWFHISCLTFGRETVLEYLVSFGVWIRTPPAYRPPNAPILSTLPETAVVRRRGRSPRRRTPSPRRRRSQSPRRRRSQSPASQC</sequence>
<reference key="1">
    <citation type="journal article" date="2000" name="J. Virol.">
        <title>Molecular epidemiology of hepatitis B virus variants in nonhuman primates.</title>
        <authorList>
            <person name="Grethe S."/>
            <person name="Heckel J.O."/>
            <person name="Rietschel W."/>
            <person name="Hufert F.T."/>
        </authorList>
    </citation>
    <scope>NUCLEOTIDE SEQUENCE [GENOMIC DNA]</scope>
</reference>